<accession>B1ZN03</accession>
<keyword id="KW-0963">Cytoplasm</keyword>
<keyword id="KW-0227">DNA damage</keyword>
<keyword id="KW-0234">DNA repair</keyword>
<keyword id="KW-0235">DNA replication</keyword>
<keyword id="KW-0238">DNA-binding</keyword>
<keyword id="KW-0239">DNA-directed DNA polymerase</keyword>
<keyword id="KW-0460">Magnesium</keyword>
<keyword id="KW-0479">Metal-binding</keyword>
<keyword id="KW-0515">Mutator protein</keyword>
<keyword id="KW-0548">Nucleotidyltransferase</keyword>
<keyword id="KW-1185">Reference proteome</keyword>
<keyword id="KW-0808">Transferase</keyword>
<name>DPO4_OPITP</name>
<feature type="chain" id="PRO_1000137145" description="DNA polymerase IV">
    <location>
        <begin position="1"/>
        <end position="392"/>
    </location>
</feature>
<feature type="domain" description="UmuC" evidence="1">
    <location>
        <begin position="6"/>
        <end position="186"/>
    </location>
</feature>
<feature type="active site" evidence="1">
    <location>
        <position position="104"/>
    </location>
</feature>
<feature type="binding site" evidence="1">
    <location>
        <position position="10"/>
    </location>
    <ligand>
        <name>Mg(2+)</name>
        <dbReference type="ChEBI" id="CHEBI:18420"/>
    </ligand>
</feature>
<feature type="binding site" evidence="1">
    <location>
        <position position="103"/>
    </location>
    <ligand>
        <name>Mg(2+)</name>
        <dbReference type="ChEBI" id="CHEBI:18420"/>
    </ligand>
</feature>
<feature type="site" description="Substrate discrimination" evidence="1">
    <location>
        <position position="15"/>
    </location>
</feature>
<organism>
    <name type="scientific">Opitutus terrae (strain DSM 11246 / JCM 15787 / PB90-1)</name>
    <dbReference type="NCBI Taxonomy" id="452637"/>
    <lineage>
        <taxon>Bacteria</taxon>
        <taxon>Pseudomonadati</taxon>
        <taxon>Verrucomicrobiota</taxon>
        <taxon>Opitutia</taxon>
        <taxon>Opitutales</taxon>
        <taxon>Opitutaceae</taxon>
        <taxon>Opitutus</taxon>
    </lineage>
</organism>
<comment type="function">
    <text evidence="1">Poorly processive, error-prone DNA polymerase involved in untargeted mutagenesis. Copies undamaged DNA at stalled replication forks, which arise in vivo from mismatched or misaligned primer ends. These misaligned primers can be extended by PolIV. Exhibits no 3'-5' exonuclease (proofreading) activity. May be involved in translesional synthesis, in conjunction with the beta clamp from PolIII.</text>
</comment>
<comment type="catalytic activity">
    <reaction evidence="1">
        <text>DNA(n) + a 2'-deoxyribonucleoside 5'-triphosphate = DNA(n+1) + diphosphate</text>
        <dbReference type="Rhea" id="RHEA:22508"/>
        <dbReference type="Rhea" id="RHEA-COMP:17339"/>
        <dbReference type="Rhea" id="RHEA-COMP:17340"/>
        <dbReference type="ChEBI" id="CHEBI:33019"/>
        <dbReference type="ChEBI" id="CHEBI:61560"/>
        <dbReference type="ChEBI" id="CHEBI:173112"/>
        <dbReference type="EC" id="2.7.7.7"/>
    </reaction>
</comment>
<comment type="cofactor">
    <cofactor evidence="1">
        <name>Mg(2+)</name>
        <dbReference type="ChEBI" id="CHEBI:18420"/>
    </cofactor>
    <text evidence="1">Binds 2 magnesium ions per subunit.</text>
</comment>
<comment type="subunit">
    <text evidence="1">Monomer.</text>
</comment>
<comment type="subcellular location">
    <subcellularLocation>
        <location evidence="1">Cytoplasm</location>
    </subcellularLocation>
</comment>
<comment type="similarity">
    <text evidence="1">Belongs to the DNA polymerase type-Y family.</text>
</comment>
<gene>
    <name evidence="1" type="primary">dinB</name>
    <name type="ordered locus">Oter_3175</name>
</gene>
<proteinExistence type="inferred from homology"/>
<sequence length="392" mass="43631">MILPTIVHLDADAFFVSCELALKPELRGTKCAVGGRERGIISSASYEARACGVYTPMPTTRALKVCPDLIMLPHTGGLYSRVSRQMFELCETLTPLVQRNSIDEGYLDLGPCGFKTSAEIEQAVHGLQHKIEQQLQITASFGLAVNKLVAQIASKLRKPKGFVVVPSGTEAEFLAPLPIGKLPGVGPKTEERLVGRHGIKLVRDLLARGEAELEAIFGDGWREMRDGALGIDDRPVETEHEDAKSYSQQETFDEDIASFAEIERVVKRMIDELLPKIREDGKRVRTMTVKVRYPDFSQESHGRSLSAGTDLEAPFYPLVTPLLRQAWTKKRPLRLVSVRFSGVEDTPVQLEMFAQNEEKRRRLAAVLDHLNRRGGDAVVQHGHQLAKRPPPR</sequence>
<dbReference type="EC" id="2.7.7.7" evidence="1"/>
<dbReference type="EMBL" id="CP001032">
    <property type="protein sequence ID" value="ACB76455.1"/>
    <property type="molecule type" value="Genomic_DNA"/>
</dbReference>
<dbReference type="RefSeq" id="WP_012375984.1">
    <property type="nucleotide sequence ID" value="NC_010571.1"/>
</dbReference>
<dbReference type="SMR" id="B1ZN03"/>
<dbReference type="STRING" id="452637.Oter_3175"/>
<dbReference type="KEGG" id="ote:Oter_3175"/>
<dbReference type="eggNOG" id="COG0389">
    <property type="taxonomic scope" value="Bacteria"/>
</dbReference>
<dbReference type="HOGENOM" id="CLU_012348_1_0_0"/>
<dbReference type="OrthoDB" id="9808813at2"/>
<dbReference type="Proteomes" id="UP000007013">
    <property type="component" value="Chromosome"/>
</dbReference>
<dbReference type="GO" id="GO:0005829">
    <property type="term" value="C:cytosol"/>
    <property type="evidence" value="ECO:0007669"/>
    <property type="project" value="TreeGrafter"/>
</dbReference>
<dbReference type="GO" id="GO:0003684">
    <property type="term" value="F:damaged DNA binding"/>
    <property type="evidence" value="ECO:0007669"/>
    <property type="project" value="InterPro"/>
</dbReference>
<dbReference type="GO" id="GO:0003887">
    <property type="term" value="F:DNA-directed DNA polymerase activity"/>
    <property type="evidence" value="ECO:0007669"/>
    <property type="project" value="UniProtKB-UniRule"/>
</dbReference>
<dbReference type="GO" id="GO:0000287">
    <property type="term" value="F:magnesium ion binding"/>
    <property type="evidence" value="ECO:0007669"/>
    <property type="project" value="UniProtKB-UniRule"/>
</dbReference>
<dbReference type="GO" id="GO:0006261">
    <property type="term" value="P:DNA-templated DNA replication"/>
    <property type="evidence" value="ECO:0007669"/>
    <property type="project" value="UniProtKB-UniRule"/>
</dbReference>
<dbReference type="GO" id="GO:0042276">
    <property type="term" value="P:error-prone translesion synthesis"/>
    <property type="evidence" value="ECO:0007669"/>
    <property type="project" value="TreeGrafter"/>
</dbReference>
<dbReference type="GO" id="GO:0009432">
    <property type="term" value="P:SOS response"/>
    <property type="evidence" value="ECO:0007669"/>
    <property type="project" value="TreeGrafter"/>
</dbReference>
<dbReference type="CDD" id="cd03586">
    <property type="entry name" value="PolY_Pol_IV_kappa"/>
    <property type="match status" value="1"/>
</dbReference>
<dbReference type="Gene3D" id="3.30.70.270">
    <property type="match status" value="1"/>
</dbReference>
<dbReference type="Gene3D" id="3.40.1170.60">
    <property type="match status" value="1"/>
</dbReference>
<dbReference type="Gene3D" id="1.10.150.20">
    <property type="entry name" value="5' to 3' exonuclease, C-terminal subdomain"/>
    <property type="match status" value="1"/>
</dbReference>
<dbReference type="Gene3D" id="3.30.1490.100">
    <property type="entry name" value="DNA polymerase, Y-family, little finger domain"/>
    <property type="match status" value="1"/>
</dbReference>
<dbReference type="HAMAP" id="MF_01113">
    <property type="entry name" value="DNApol_IV"/>
    <property type="match status" value="1"/>
</dbReference>
<dbReference type="InterPro" id="IPR043502">
    <property type="entry name" value="DNA/RNA_pol_sf"/>
</dbReference>
<dbReference type="InterPro" id="IPR036775">
    <property type="entry name" value="DNA_pol_Y-fam_lit_finger_sf"/>
</dbReference>
<dbReference type="InterPro" id="IPR017961">
    <property type="entry name" value="DNA_pol_Y-fam_little_finger"/>
</dbReference>
<dbReference type="InterPro" id="IPR050116">
    <property type="entry name" value="DNA_polymerase-Y"/>
</dbReference>
<dbReference type="InterPro" id="IPR022880">
    <property type="entry name" value="DNApol_IV"/>
</dbReference>
<dbReference type="InterPro" id="IPR024728">
    <property type="entry name" value="PolY_HhH_motif"/>
</dbReference>
<dbReference type="InterPro" id="IPR043128">
    <property type="entry name" value="Rev_trsase/Diguanyl_cyclase"/>
</dbReference>
<dbReference type="InterPro" id="IPR001126">
    <property type="entry name" value="UmuC"/>
</dbReference>
<dbReference type="PANTHER" id="PTHR11076:SF33">
    <property type="entry name" value="DNA POLYMERASE KAPPA"/>
    <property type="match status" value="1"/>
</dbReference>
<dbReference type="PANTHER" id="PTHR11076">
    <property type="entry name" value="DNA REPAIR POLYMERASE UMUC / TRANSFERASE FAMILY MEMBER"/>
    <property type="match status" value="1"/>
</dbReference>
<dbReference type="Pfam" id="PF00817">
    <property type="entry name" value="IMS"/>
    <property type="match status" value="1"/>
</dbReference>
<dbReference type="Pfam" id="PF11799">
    <property type="entry name" value="IMS_C"/>
    <property type="match status" value="1"/>
</dbReference>
<dbReference type="Pfam" id="PF11798">
    <property type="entry name" value="IMS_HHH"/>
    <property type="match status" value="1"/>
</dbReference>
<dbReference type="SUPFAM" id="SSF56672">
    <property type="entry name" value="DNA/RNA polymerases"/>
    <property type="match status" value="1"/>
</dbReference>
<dbReference type="SUPFAM" id="SSF100879">
    <property type="entry name" value="Lesion bypass DNA polymerase (Y-family), little finger domain"/>
    <property type="match status" value="1"/>
</dbReference>
<dbReference type="PROSITE" id="PS50173">
    <property type="entry name" value="UMUC"/>
    <property type="match status" value="1"/>
</dbReference>
<evidence type="ECO:0000255" key="1">
    <source>
        <dbReference type="HAMAP-Rule" id="MF_01113"/>
    </source>
</evidence>
<reference key="1">
    <citation type="journal article" date="2011" name="J. Bacteriol.">
        <title>Genome sequence of the verrucomicrobium Opitutus terrae PB90-1, an abundant inhabitant of rice paddy soil ecosystems.</title>
        <authorList>
            <person name="van Passel M.W."/>
            <person name="Kant R."/>
            <person name="Palva A."/>
            <person name="Copeland A."/>
            <person name="Lucas S."/>
            <person name="Lapidus A."/>
            <person name="Glavina del Rio T."/>
            <person name="Pitluck S."/>
            <person name="Goltsman E."/>
            <person name="Clum A."/>
            <person name="Sun H."/>
            <person name="Schmutz J."/>
            <person name="Larimer F.W."/>
            <person name="Land M.L."/>
            <person name="Hauser L."/>
            <person name="Kyrpides N."/>
            <person name="Mikhailova N."/>
            <person name="Richardson P.P."/>
            <person name="Janssen P.H."/>
            <person name="de Vos W.M."/>
            <person name="Smidt H."/>
        </authorList>
    </citation>
    <scope>NUCLEOTIDE SEQUENCE [LARGE SCALE GENOMIC DNA]</scope>
    <source>
        <strain>DSM 11246 / JCM 15787 / PB90-1</strain>
    </source>
</reference>
<protein>
    <recommendedName>
        <fullName evidence="1">DNA polymerase IV</fullName>
        <shortName evidence="1">Pol IV</shortName>
        <ecNumber evidence="1">2.7.7.7</ecNumber>
    </recommendedName>
</protein>